<keyword id="KW-0687">Ribonucleoprotein</keyword>
<keyword id="KW-0689">Ribosomal protein</keyword>
<keyword id="KW-0694">RNA-binding</keyword>
<keyword id="KW-0699">rRNA-binding</keyword>
<proteinExistence type="inferred from homology"/>
<organism>
    <name type="scientific">Escherichia coli (strain SMS-3-5 / SECEC)</name>
    <dbReference type="NCBI Taxonomy" id="439855"/>
    <lineage>
        <taxon>Bacteria</taxon>
        <taxon>Pseudomonadati</taxon>
        <taxon>Pseudomonadota</taxon>
        <taxon>Gammaproteobacteria</taxon>
        <taxon>Enterobacterales</taxon>
        <taxon>Enterobacteriaceae</taxon>
        <taxon>Escherichia</taxon>
    </lineage>
</organism>
<sequence length="84" mass="9704">MTDKIRTLQGRVVSDKMEKSIVVAIERFVKHPIYGKFIKRTTKLHVHDENNECGIGDVVEIRECRPLSKTKSWTLVRVVEKAVL</sequence>
<feature type="chain" id="PRO_1000143256" description="Small ribosomal subunit protein uS17">
    <location>
        <begin position="1"/>
        <end position="84"/>
    </location>
</feature>
<protein>
    <recommendedName>
        <fullName evidence="1">Small ribosomal subunit protein uS17</fullName>
    </recommendedName>
    <alternativeName>
        <fullName evidence="2">30S ribosomal protein S17</fullName>
    </alternativeName>
</protein>
<comment type="function">
    <text evidence="1">One of the primary rRNA binding proteins, it binds specifically to the 5'-end of 16S ribosomal RNA.</text>
</comment>
<comment type="subunit">
    <text evidence="1">Part of the 30S ribosomal subunit.</text>
</comment>
<comment type="similarity">
    <text evidence="1">Belongs to the universal ribosomal protein uS17 family.</text>
</comment>
<reference key="1">
    <citation type="journal article" date="2008" name="J. Bacteriol.">
        <title>Insights into the environmental resistance gene pool from the genome sequence of the multidrug-resistant environmental isolate Escherichia coli SMS-3-5.</title>
        <authorList>
            <person name="Fricke W.F."/>
            <person name="Wright M.S."/>
            <person name="Lindell A.H."/>
            <person name="Harkins D.M."/>
            <person name="Baker-Austin C."/>
            <person name="Ravel J."/>
            <person name="Stepanauskas R."/>
        </authorList>
    </citation>
    <scope>NUCLEOTIDE SEQUENCE [LARGE SCALE GENOMIC DNA]</scope>
    <source>
        <strain>SMS-3-5 / SECEC</strain>
    </source>
</reference>
<name>RS17_ECOSM</name>
<evidence type="ECO:0000255" key="1">
    <source>
        <dbReference type="HAMAP-Rule" id="MF_01345"/>
    </source>
</evidence>
<evidence type="ECO:0000305" key="2"/>
<accession>B1LHC5</accession>
<gene>
    <name evidence="1" type="primary">rpsQ</name>
    <name type="ordered locus">EcSMS35_3606</name>
</gene>
<dbReference type="EMBL" id="CP000970">
    <property type="protein sequence ID" value="ACB16902.1"/>
    <property type="molecule type" value="Genomic_DNA"/>
</dbReference>
<dbReference type="RefSeq" id="WP_000130100.1">
    <property type="nucleotide sequence ID" value="NC_010498.1"/>
</dbReference>
<dbReference type="SMR" id="B1LHC5"/>
<dbReference type="GeneID" id="93778676"/>
<dbReference type="KEGG" id="ecm:EcSMS35_3606"/>
<dbReference type="HOGENOM" id="CLU_073626_1_1_6"/>
<dbReference type="Proteomes" id="UP000007011">
    <property type="component" value="Chromosome"/>
</dbReference>
<dbReference type="GO" id="GO:0022627">
    <property type="term" value="C:cytosolic small ribosomal subunit"/>
    <property type="evidence" value="ECO:0007669"/>
    <property type="project" value="TreeGrafter"/>
</dbReference>
<dbReference type="GO" id="GO:0019843">
    <property type="term" value="F:rRNA binding"/>
    <property type="evidence" value="ECO:0007669"/>
    <property type="project" value="UniProtKB-UniRule"/>
</dbReference>
<dbReference type="GO" id="GO:0003735">
    <property type="term" value="F:structural constituent of ribosome"/>
    <property type="evidence" value="ECO:0007669"/>
    <property type="project" value="InterPro"/>
</dbReference>
<dbReference type="GO" id="GO:0006412">
    <property type="term" value="P:translation"/>
    <property type="evidence" value="ECO:0007669"/>
    <property type="project" value="UniProtKB-UniRule"/>
</dbReference>
<dbReference type="CDD" id="cd00364">
    <property type="entry name" value="Ribosomal_uS17"/>
    <property type="match status" value="1"/>
</dbReference>
<dbReference type="FunFam" id="2.40.50.140:FF:000014">
    <property type="entry name" value="30S ribosomal protein S17"/>
    <property type="match status" value="1"/>
</dbReference>
<dbReference type="Gene3D" id="2.40.50.140">
    <property type="entry name" value="Nucleic acid-binding proteins"/>
    <property type="match status" value="1"/>
</dbReference>
<dbReference type="HAMAP" id="MF_01345_B">
    <property type="entry name" value="Ribosomal_uS17_B"/>
    <property type="match status" value="1"/>
</dbReference>
<dbReference type="InterPro" id="IPR012340">
    <property type="entry name" value="NA-bd_OB-fold"/>
</dbReference>
<dbReference type="InterPro" id="IPR000266">
    <property type="entry name" value="Ribosomal_uS17"/>
</dbReference>
<dbReference type="InterPro" id="IPR019984">
    <property type="entry name" value="Ribosomal_uS17_bact/chlr"/>
</dbReference>
<dbReference type="InterPro" id="IPR019979">
    <property type="entry name" value="Ribosomal_uS17_CS"/>
</dbReference>
<dbReference type="NCBIfam" id="NF004123">
    <property type="entry name" value="PRK05610.1"/>
    <property type="match status" value="1"/>
</dbReference>
<dbReference type="NCBIfam" id="TIGR03635">
    <property type="entry name" value="uS17_bact"/>
    <property type="match status" value="1"/>
</dbReference>
<dbReference type="PANTHER" id="PTHR10744">
    <property type="entry name" value="40S RIBOSOMAL PROTEIN S11 FAMILY MEMBER"/>
    <property type="match status" value="1"/>
</dbReference>
<dbReference type="PANTHER" id="PTHR10744:SF1">
    <property type="entry name" value="SMALL RIBOSOMAL SUBUNIT PROTEIN US17M"/>
    <property type="match status" value="1"/>
</dbReference>
<dbReference type="Pfam" id="PF00366">
    <property type="entry name" value="Ribosomal_S17"/>
    <property type="match status" value="1"/>
</dbReference>
<dbReference type="PRINTS" id="PR00973">
    <property type="entry name" value="RIBOSOMALS17"/>
</dbReference>
<dbReference type="SUPFAM" id="SSF50249">
    <property type="entry name" value="Nucleic acid-binding proteins"/>
    <property type="match status" value="1"/>
</dbReference>
<dbReference type="PROSITE" id="PS00056">
    <property type="entry name" value="RIBOSOMAL_S17"/>
    <property type="match status" value="1"/>
</dbReference>